<gene>
    <name type="primary">TPPH</name>
    <name type="ordered locus">At4g39770</name>
    <name type="ORF">T19P19.160</name>
</gene>
<reference key="1">
    <citation type="journal article" date="1999" name="Nature">
        <title>Sequence and analysis of chromosome 4 of the plant Arabidopsis thaliana.</title>
        <authorList>
            <person name="Mayer K.F.X."/>
            <person name="Schueller C."/>
            <person name="Wambutt R."/>
            <person name="Murphy G."/>
            <person name="Volckaert G."/>
            <person name="Pohl T."/>
            <person name="Duesterhoeft A."/>
            <person name="Stiekema W."/>
            <person name="Entian K.-D."/>
            <person name="Terryn N."/>
            <person name="Harris B."/>
            <person name="Ansorge W."/>
            <person name="Brandt P."/>
            <person name="Grivell L.A."/>
            <person name="Rieger M."/>
            <person name="Weichselgartner M."/>
            <person name="de Simone V."/>
            <person name="Obermaier B."/>
            <person name="Mache R."/>
            <person name="Mueller M."/>
            <person name="Kreis M."/>
            <person name="Delseny M."/>
            <person name="Puigdomenech P."/>
            <person name="Watson M."/>
            <person name="Schmidtheini T."/>
            <person name="Reichert B."/>
            <person name="Portetelle D."/>
            <person name="Perez-Alonso M."/>
            <person name="Boutry M."/>
            <person name="Bancroft I."/>
            <person name="Vos P."/>
            <person name="Hoheisel J."/>
            <person name="Zimmermann W."/>
            <person name="Wedler H."/>
            <person name="Ridley P."/>
            <person name="Langham S.-A."/>
            <person name="McCullagh B."/>
            <person name="Bilham L."/>
            <person name="Robben J."/>
            <person name="van der Schueren J."/>
            <person name="Grymonprez B."/>
            <person name="Chuang Y.-J."/>
            <person name="Vandenbussche F."/>
            <person name="Braeken M."/>
            <person name="Weltjens I."/>
            <person name="Voet M."/>
            <person name="Bastiaens I."/>
            <person name="Aert R."/>
            <person name="Defoor E."/>
            <person name="Weitzenegger T."/>
            <person name="Bothe G."/>
            <person name="Ramsperger U."/>
            <person name="Hilbert H."/>
            <person name="Braun M."/>
            <person name="Holzer E."/>
            <person name="Brandt A."/>
            <person name="Peters S."/>
            <person name="van Staveren M."/>
            <person name="Dirkse W."/>
            <person name="Mooijman P."/>
            <person name="Klein Lankhorst R."/>
            <person name="Rose M."/>
            <person name="Hauf J."/>
            <person name="Koetter P."/>
            <person name="Berneiser S."/>
            <person name="Hempel S."/>
            <person name="Feldpausch M."/>
            <person name="Lamberth S."/>
            <person name="Van den Daele H."/>
            <person name="De Keyser A."/>
            <person name="Buysshaert C."/>
            <person name="Gielen J."/>
            <person name="Villarroel R."/>
            <person name="De Clercq R."/>
            <person name="van Montagu M."/>
            <person name="Rogers J."/>
            <person name="Cronin A."/>
            <person name="Quail M.A."/>
            <person name="Bray-Allen S."/>
            <person name="Clark L."/>
            <person name="Doggett J."/>
            <person name="Hall S."/>
            <person name="Kay M."/>
            <person name="Lennard N."/>
            <person name="McLay K."/>
            <person name="Mayes R."/>
            <person name="Pettett A."/>
            <person name="Rajandream M.A."/>
            <person name="Lyne M."/>
            <person name="Benes V."/>
            <person name="Rechmann S."/>
            <person name="Borkova D."/>
            <person name="Bloecker H."/>
            <person name="Scharfe M."/>
            <person name="Grimm M."/>
            <person name="Loehnert T.-H."/>
            <person name="Dose S."/>
            <person name="de Haan M."/>
            <person name="Maarse A.C."/>
            <person name="Schaefer M."/>
            <person name="Mueller-Auer S."/>
            <person name="Gabel C."/>
            <person name="Fuchs M."/>
            <person name="Fartmann B."/>
            <person name="Granderath K."/>
            <person name="Dauner D."/>
            <person name="Herzl A."/>
            <person name="Neumann S."/>
            <person name="Argiriou A."/>
            <person name="Vitale D."/>
            <person name="Liguori R."/>
            <person name="Piravandi E."/>
            <person name="Massenet O."/>
            <person name="Quigley F."/>
            <person name="Clabauld G."/>
            <person name="Muendlein A."/>
            <person name="Felber R."/>
            <person name="Schnabl S."/>
            <person name="Hiller R."/>
            <person name="Schmidt W."/>
            <person name="Lecharny A."/>
            <person name="Aubourg S."/>
            <person name="Chefdor F."/>
            <person name="Cooke R."/>
            <person name="Berger C."/>
            <person name="Monfort A."/>
            <person name="Casacuberta E."/>
            <person name="Gibbons T."/>
            <person name="Weber N."/>
            <person name="Vandenbol M."/>
            <person name="Bargues M."/>
            <person name="Terol J."/>
            <person name="Torres A."/>
            <person name="Perez-Perez A."/>
            <person name="Purnelle B."/>
            <person name="Bent E."/>
            <person name="Johnson S."/>
            <person name="Tacon D."/>
            <person name="Jesse T."/>
            <person name="Heijnen L."/>
            <person name="Schwarz S."/>
            <person name="Scholler P."/>
            <person name="Heber S."/>
            <person name="Francs P."/>
            <person name="Bielke C."/>
            <person name="Frishman D."/>
            <person name="Haase D."/>
            <person name="Lemcke K."/>
            <person name="Mewes H.-W."/>
            <person name="Stocker S."/>
            <person name="Zaccaria P."/>
            <person name="Bevan M."/>
            <person name="Wilson R.K."/>
            <person name="de la Bastide M."/>
            <person name="Habermann K."/>
            <person name="Parnell L."/>
            <person name="Dedhia N."/>
            <person name="Gnoj L."/>
            <person name="Schutz K."/>
            <person name="Huang E."/>
            <person name="Spiegel L."/>
            <person name="Sekhon M."/>
            <person name="Murray J."/>
            <person name="Sheet P."/>
            <person name="Cordes M."/>
            <person name="Abu-Threideh J."/>
            <person name="Stoneking T."/>
            <person name="Kalicki J."/>
            <person name="Graves T."/>
            <person name="Harmon G."/>
            <person name="Edwards J."/>
            <person name="Latreille P."/>
            <person name="Courtney L."/>
            <person name="Cloud J."/>
            <person name="Abbott A."/>
            <person name="Scott K."/>
            <person name="Johnson D."/>
            <person name="Minx P."/>
            <person name="Bentley D."/>
            <person name="Fulton B."/>
            <person name="Miller N."/>
            <person name="Greco T."/>
            <person name="Kemp K."/>
            <person name="Kramer J."/>
            <person name="Fulton L."/>
            <person name="Mardis E."/>
            <person name="Dante M."/>
            <person name="Pepin K."/>
            <person name="Hillier L.W."/>
            <person name="Nelson J."/>
            <person name="Spieth J."/>
            <person name="Ryan E."/>
            <person name="Andrews S."/>
            <person name="Geisel C."/>
            <person name="Layman D."/>
            <person name="Du H."/>
            <person name="Ali J."/>
            <person name="Berghoff A."/>
            <person name="Jones K."/>
            <person name="Drone K."/>
            <person name="Cotton M."/>
            <person name="Joshu C."/>
            <person name="Antonoiu B."/>
            <person name="Zidanic M."/>
            <person name="Strong C."/>
            <person name="Sun H."/>
            <person name="Lamar B."/>
            <person name="Yordan C."/>
            <person name="Ma P."/>
            <person name="Zhong J."/>
            <person name="Preston R."/>
            <person name="Vil D."/>
            <person name="Shekher M."/>
            <person name="Matero A."/>
            <person name="Shah R."/>
            <person name="Swaby I.K."/>
            <person name="O'Shaughnessy A."/>
            <person name="Rodriguez M."/>
            <person name="Hoffman J."/>
            <person name="Till S."/>
            <person name="Granat S."/>
            <person name="Shohdy N."/>
            <person name="Hasegawa A."/>
            <person name="Hameed A."/>
            <person name="Lodhi M."/>
            <person name="Johnson A."/>
            <person name="Chen E."/>
            <person name="Marra M.A."/>
            <person name="Martienssen R."/>
            <person name="McCombie W.R."/>
        </authorList>
    </citation>
    <scope>NUCLEOTIDE SEQUENCE [LARGE SCALE GENOMIC DNA]</scope>
    <source>
        <strain>cv. Columbia</strain>
    </source>
</reference>
<reference key="2">
    <citation type="journal article" date="2017" name="Plant J.">
        <title>Araport11: a complete reannotation of the Arabidopsis thaliana reference genome.</title>
        <authorList>
            <person name="Cheng C.Y."/>
            <person name="Krishnakumar V."/>
            <person name="Chan A.P."/>
            <person name="Thibaud-Nissen F."/>
            <person name="Schobel S."/>
            <person name="Town C.D."/>
        </authorList>
    </citation>
    <scope>GENOME REANNOTATION</scope>
    <source>
        <strain>cv. Columbia</strain>
    </source>
</reference>
<reference key="3">
    <citation type="journal article" date="2002" name="Science">
        <title>Functional annotation of a full-length Arabidopsis cDNA collection.</title>
        <authorList>
            <person name="Seki M."/>
            <person name="Narusaka M."/>
            <person name="Kamiya A."/>
            <person name="Ishida J."/>
            <person name="Satou M."/>
            <person name="Sakurai T."/>
            <person name="Nakajima M."/>
            <person name="Enju A."/>
            <person name="Akiyama K."/>
            <person name="Oono Y."/>
            <person name="Muramatsu M."/>
            <person name="Hayashizaki Y."/>
            <person name="Kawai J."/>
            <person name="Carninci P."/>
            <person name="Itoh M."/>
            <person name="Ishii Y."/>
            <person name="Arakawa T."/>
            <person name="Shibata K."/>
            <person name="Shinagawa A."/>
            <person name="Shinozaki K."/>
        </authorList>
    </citation>
    <scope>NUCLEOTIDE SEQUENCE [LARGE SCALE MRNA]</scope>
    <source>
        <strain>cv. Columbia</strain>
    </source>
</reference>
<reference key="4">
    <citation type="journal article" date="2003" name="Science">
        <title>Empirical analysis of transcriptional activity in the Arabidopsis genome.</title>
        <authorList>
            <person name="Yamada K."/>
            <person name="Lim J."/>
            <person name="Dale J.M."/>
            <person name="Chen H."/>
            <person name="Shinn P."/>
            <person name="Palm C.J."/>
            <person name="Southwick A.M."/>
            <person name="Wu H.C."/>
            <person name="Kim C.J."/>
            <person name="Nguyen M."/>
            <person name="Pham P.K."/>
            <person name="Cheuk R.F."/>
            <person name="Karlin-Newmann G."/>
            <person name="Liu S.X."/>
            <person name="Lam B."/>
            <person name="Sakano H."/>
            <person name="Wu T."/>
            <person name="Yu G."/>
            <person name="Miranda M."/>
            <person name="Quach H.L."/>
            <person name="Tripp M."/>
            <person name="Chang C.H."/>
            <person name="Lee J.M."/>
            <person name="Toriumi M.J."/>
            <person name="Chan M.M."/>
            <person name="Tang C.C."/>
            <person name="Onodera C.S."/>
            <person name="Deng J.M."/>
            <person name="Akiyama K."/>
            <person name="Ansari Y."/>
            <person name="Arakawa T."/>
            <person name="Banh J."/>
            <person name="Banno F."/>
            <person name="Bowser L."/>
            <person name="Brooks S.Y."/>
            <person name="Carninci P."/>
            <person name="Chao Q."/>
            <person name="Choy N."/>
            <person name="Enju A."/>
            <person name="Goldsmith A.D."/>
            <person name="Gurjal M."/>
            <person name="Hansen N.F."/>
            <person name="Hayashizaki Y."/>
            <person name="Johnson-Hopson C."/>
            <person name="Hsuan V.W."/>
            <person name="Iida K."/>
            <person name="Karnes M."/>
            <person name="Khan S."/>
            <person name="Koesema E."/>
            <person name="Ishida J."/>
            <person name="Jiang P.X."/>
            <person name="Jones T."/>
            <person name="Kawai J."/>
            <person name="Kamiya A."/>
            <person name="Meyers C."/>
            <person name="Nakajima M."/>
            <person name="Narusaka M."/>
            <person name="Seki M."/>
            <person name="Sakurai T."/>
            <person name="Satou M."/>
            <person name="Tamse R."/>
            <person name="Vaysberg M."/>
            <person name="Wallender E.K."/>
            <person name="Wong C."/>
            <person name="Yamamura Y."/>
            <person name="Yuan S."/>
            <person name="Shinozaki K."/>
            <person name="Davis R.W."/>
            <person name="Theologis A."/>
            <person name="Ecker J.R."/>
        </authorList>
    </citation>
    <scope>NUCLEOTIDE SEQUENCE [LARGE SCALE MRNA]</scope>
    <source>
        <strain>cv. Columbia</strain>
    </source>
</reference>
<reference key="5">
    <citation type="journal article" date="2003" name="J. Exp. Bot.">
        <title>Is trehalose-6-phosphate a regulator of sugar metabolism in plants?</title>
        <authorList>
            <person name="Eastmond P.J."/>
            <person name="Li Y."/>
            <person name="Graham I.A."/>
        </authorList>
    </citation>
    <scope>GENE FAMILY</scope>
</reference>
<reference key="6">
    <citation type="journal article" date="2004" name="Plant Physiol.">
        <title>Trehalose mediated growth inhibition of Arabidopsis seedlings is due to trehalose-6-phosphate accumulation.</title>
        <authorList>
            <person name="Schluepmann H."/>
            <person name="van Dijken A.J.H."/>
            <person name="Aghdasi M."/>
            <person name="Wobbes B."/>
            <person name="Paul M."/>
            <person name="Smeekens S.C.M."/>
        </authorList>
    </citation>
    <scope>INDUCTION</scope>
    <scope>NOMENCLATURE</scope>
</reference>
<evidence type="ECO:0000250" key="1"/>
<evidence type="ECO:0000269" key="2">
    <source>
    </source>
</evidence>
<evidence type="ECO:0000305" key="3"/>
<sequence length="349" mass="39999">MVRFIEENTKLVEKETGNKSNNDVTTTKKKALQDIIINNGVGLINSWVDSMRACSPTHLKSLLKQSSWLTEHPSALDMFEEILHLSEGKQIVMFLDYDGTLSPIVDDPDRAFMSRKMRRTVRKLANCFPTAIVSGRCIEKVYNFVKLTELYYAGSHGMDIKGPEQGSKYEQILQDSKSLLCQPATEFLPMIDEVYHKLVEKTKSTPGAQVENNKFCVSVHFRRVDENNWSDLANQVRSVMKDYPKLRLTQGRKVLEVRPIIKWDKGKALEFLLESLGYANCTDVFPLYIGDDRTDEDAFKVLRERRQGLGILVSKFPKETSASYSLQEPDEVMEFLQRLVEWKQLRSGA</sequence>
<proteinExistence type="evidence at transcript level"/>
<keyword id="KW-0378">Hydrolase</keyword>
<keyword id="KW-1185">Reference proteome</keyword>
<keyword id="KW-0346">Stress response</keyword>
<protein>
    <recommendedName>
        <fullName>Probable trehalose-phosphate phosphatase H</fullName>
        <shortName>AtTPPH</shortName>
        <ecNumber>3.1.3.12</ecNumber>
    </recommendedName>
    <alternativeName>
        <fullName>Trehalose 6-phosphate phosphatase</fullName>
    </alternativeName>
</protein>
<name>TPPH_ARATH</name>
<organism>
    <name type="scientific">Arabidopsis thaliana</name>
    <name type="common">Mouse-ear cress</name>
    <dbReference type="NCBI Taxonomy" id="3702"/>
    <lineage>
        <taxon>Eukaryota</taxon>
        <taxon>Viridiplantae</taxon>
        <taxon>Streptophyta</taxon>
        <taxon>Embryophyta</taxon>
        <taxon>Tracheophyta</taxon>
        <taxon>Spermatophyta</taxon>
        <taxon>Magnoliopsida</taxon>
        <taxon>eudicotyledons</taxon>
        <taxon>Gunneridae</taxon>
        <taxon>Pentapetalae</taxon>
        <taxon>rosids</taxon>
        <taxon>malvids</taxon>
        <taxon>Brassicales</taxon>
        <taxon>Brassicaceae</taxon>
        <taxon>Camelineae</taxon>
        <taxon>Arabidopsis</taxon>
    </lineage>
</organism>
<feature type="chain" id="PRO_0000417650" description="Probable trehalose-phosphate phosphatase H">
    <location>
        <begin position="1"/>
        <end position="349"/>
    </location>
</feature>
<accession>Q8GWG2</accession>
<accession>O65664</accession>
<comment type="function">
    <text evidence="1">Removes the phosphate from trehalose 6-phosphate to produce free trehalose. Trehalose accumulation in plant may improve abiotic stress tolerance (By similarity).</text>
</comment>
<comment type="catalytic activity">
    <reaction>
        <text>alpha,alpha-trehalose 6-phosphate + H2O = alpha,alpha-trehalose + phosphate</text>
        <dbReference type="Rhea" id="RHEA:23420"/>
        <dbReference type="ChEBI" id="CHEBI:15377"/>
        <dbReference type="ChEBI" id="CHEBI:16551"/>
        <dbReference type="ChEBI" id="CHEBI:43474"/>
        <dbReference type="ChEBI" id="CHEBI:58429"/>
        <dbReference type="EC" id="3.1.3.12"/>
    </reaction>
</comment>
<comment type="cofactor">
    <cofactor evidence="1">
        <name>a divalent metal cation</name>
        <dbReference type="ChEBI" id="CHEBI:60240"/>
    </cofactor>
</comment>
<comment type="pathway">
    <text>Glycan biosynthesis; trehalose biosynthesis.</text>
</comment>
<comment type="induction">
    <text evidence="2">By trehalose.</text>
</comment>
<comment type="similarity">
    <text evidence="3">Belongs to the trehalose phosphatase family.</text>
</comment>
<comment type="sequence caution" evidence="3">
    <conflict type="erroneous gene model prediction">
        <sequence resource="EMBL-CDS" id="CAA18763"/>
    </conflict>
</comment>
<comment type="sequence caution" evidence="3">
    <conflict type="erroneous gene model prediction">
        <sequence resource="EMBL-CDS" id="CAB80640"/>
    </conflict>
</comment>
<dbReference type="EC" id="3.1.3.12"/>
<dbReference type="EMBL" id="AL022605">
    <property type="protein sequence ID" value="CAA18763.1"/>
    <property type="status" value="ALT_SEQ"/>
    <property type="molecule type" value="Genomic_DNA"/>
</dbReference>
<dbReference type="EMBL" id="AL161595">
    <property type="protein sequence ID" value="CAB80640.1"/>
    <property type="status" value="ALT_SEQ"/>
    <property type="molecule type" value="Genomic_DNA"/>
</dbReference>
<dbReference type="EMBL" id="CP002687">
    <property type="protein sequence ID" value="AEE87117.1"/>
    <property type="molecule type" value="Genomic_DNA"/>
</dbReference>
<dbReference type="EMBL" id="AK118867">
    <property type="protein sequence ID" value="BAC43453.1"/>
    <property type="molecule type" value="mRNA"/>
</dbReference>
<dbReference type="EMBL" id="BT005555">
    <property type="protein sequence ID" value="AAO63975.1"/>
    <property type="molecule type" value="mRNA"/>
</dbReference>
<dbReference type="PIR" id="T05014">
    <property type="entry name" value="T05014"/>
</dbReference>
<dbReference type="RefSeq" id="NP_195687.2">
    <property type="nucleotide sequence ID" value="NM_120140.3"/>
</dbReference>
<dbReference type="SMR" id="Q8GWG2"/>
<dbReference type="FunCoup" id="Q8GWG2">
    <property type="interactions" value="172"/>
</dbReference>
<dbReference type="STRING" id="3702.Q8GWG2"/>
<dbReference type="PaxDb" id="3702-AT4G39770.1"/>
<dbReference type="EnsemblPlants" id="AT4G39770.1">
    <property type="protein sequence ID" value="AT4G39770.1"/>
    <property type="gene ID" value="AT4G39770"/>
</dbReference>
<dbReference type="GeneID" id="830135"/>
<dbReference type="Gramene" id="AT4G39770.1">
    <property type="protein sequence ID" value="AT4G39770.1"/>
    <property type="gene ID" value="AT4G39770"/>
</dbReference>
<dbReference type="KEGG" id="ath:AT4G39770"/>
<dbReference type="Araport" id="AT4G39770"/>
<dbReference type="TAIR" id="AT4G39770">
    <property type="gene designation" value="TPPH"/>
</dbReference>
<dbReference type="eggNOG" id="KOG1050">
    <property type="taxonomic scope" value="Eukaryota"/>
</dbReference>
<dbReference type="HOGENOM" id="CLU_037265_1_1_1"/>
<dbReference type="InParanoid" id="Q8GWG2"/>
<dbReference type="OMA" id="QRLVQWK"/>
<dbReference type="PhylomeDB" id="Q8GWG2"/>
<dbReference type="UniPathway" id="UPA00299"/>
<dbReference type="PRO" id="PR:Q8GWG2"/>
<dbReference type="Proteomes" id="UP000006548">
    <property type="component" value="Chromosome 4"/>
</dbReference>
<dbReference type="ExpressionAtlas" id="Q8GWG2">
    <property type="expression patterns" value="baseline and differential"/>
</dbReference>
<dbReference type="GO" id="GO:0005829">
    <property type="term" value="C:cytosol"/>
    <property type="evidence" value="ECO:0000314"/>
    <property type="project" value="TAIR"/>
</dbReference>
<dbReference type="GO" id="GO:0005634">
    <property type="term" value="C:nucleus"/>
    <property type="evidence" value="ECO:0000314"/>
    <property type="project" value="TAIR"/>
</dbReference>
<dbReference type="GO" id="GO:0004805">
    <property type="term" value="F:trehalose-phosphatase activity"/>
    <property type="evidence" value="ECO:0000314"/>
    <property type="project" value="TAIR"/>
</dbReference>
<dbReference type="GO" id="GO:0005992">
    <property type="term" value="P:trehalose biosynthetic process"/>
    <property type="evidence" value="ECO:0007669"/>
    <property type="project" value="UniProtKB-UniPathway"/>
</dbReference>
<dbReference type="CDD" id="cd01627">
    <property type="entry name" value="HAD_TPP"/>
    <property type="match status" value="1"/>
</dbReference>
<dbReference type="FunFam" id="3.40.50.1000:FF:000073">
    <property type="entry name" value="Trehalose 6-phosphate phosphatase"/>
    <property type="match status" value="1"/>
</dbReference>
<dbReference type="FunFam" id="3.40.50.1000:FF:000099">
    <property type="entry name" value="Trehalose 6-phosphate phosphatase"/>
    <property type="match status" value="1"/>
</dbReference>
<dbReference type="Gene3D" id="3.40.50.1000">
    <property type="entry name" value="HAD superfamily/HAD-like"/>
    <property type="match status" value="2"/>
</dbReference>
<dbReference type="InterPro" id="IPR036412">
    <property type="entry name" value="HAD-like_sf"/>
</dbReference>
<dbReference type="InterPro" id="IPR006379">
    <property type="entry name" value="HAD-SF_hydro_IIB"/>
</dbReference>
<dbReference type="InterPro" id="IPR023214">
    <property type="entry name" value="HAD_sf"/>
</dbReference>
<dbReference type="InterPro" id="IPR044651">
    <property type="entry name" value="OTSB-like"/>
</dbReference>
<dbReference type="InterPro" id="IPR003337">
    <property type="entry name" value="Trehalose_PPase"/>
</dbReference>
<dbReference type="NCBIfam" id="TIGR01484">
    <property type="entry name" value="HAD-SF-IIB"/>
    <property type="match status" value="1"/>
</dbReference>
<dbReference type="NCBIfam" id="TIGR00685">
    <property type="entry name" value="T6PP"/>
    <property type="match status" value="1"/>
</dbReference>
<dbReference type="PANTHER" id="PTHR43768">
    <property type="entry name" value="TREHALOSE 6-PHOSPHATE PHOSPHATASE"/>
    <property type="match status" value="1"/>
</dbReference>
<dbReference type="PANTHER" id="PTHR43768:SF29">
    <property type="entry name" value="TREHALOSE-PHOSPHATE PHOSPHATASE H-RELATED"/>
    <property type="match status" value="1"/>
</dbReference>
<dbReference type="Pfam" id="PF02358">
    <property type="entry name" value="Trehalose_PPase"/>
    <property type="match status" value="1"/>
</dbReference>
<dbReference type="SUPFAM" id="SSF56784">
    <property type="entry name" value="HAD-like"/>
    <property type="match status" value="1"/>
</dbReference>